<organism>
    <name type="scientific">Acinetobacter baylyi (strain ATCC 33305 / BD413 / ADP1)</name>
    <dbReference type="NCBI Taxonomy" id="62977"/>
    <lineage>
        <taxon>Bacteria</taxon>
        <taxon>Pseudomonadati</taxon>
        <taxon>Pseudomonadota</taxon>
        <taxon>Gammaproteobacteria</taxon>
        <taxon>Moraxellales</taxon>
        <taxon>Moraxellaceae</taxon>
        <taxon>Acinetobacter</taxon>
    </lineage>
</organism>
<dbReference type="EMBL" id="CR543861">
    <property type="protein sequence ID" value="CAG68255.1"/>
    <property type="molecule type" value="Genomic_DNA"/>
</dbReference>
<dbReference type="RefSeq" id="WP_004925626.1">
    <property type="nucleotide sequence ID" value="NC_005966.1"/>
</dbReference>
<dbReference type="SMR" id="Q6FCF6"/>
<dbReference type="STRING" id="202950.GCA_001485005_01146"/>
<dbReference type="GeneID" id="67510832"/>
<dbReference type="KEGG" id="aci:ACIAD1389"/>
<dbReference type="eggNOG" id="COG0268">
    <property type="taxonomic scope" value="Bacteria"/>
</dbReference>
<dbReference type="HOGENOM" id="CLU_160655_4_0_6"/>
<dbReference type="OrthoDB" id="9807974at2"/>
<dbReference type="BioCyc" id="ASP62977:ACIAD_RS06410-MONOMER"/>
<dbReference type="Proteomes" id="UP000000430">
    <property type="component" value="Chromosome"/>
</dbReference>
<dbReference type="GO" id="GO:0005829">
    <property type="term" value="C:cytosol"/>
    <property type="evidence" value="ECO:0007669"/>
    <property type="project" value="TreeGrafter"/>
</dbReference>
<dbReference type="GO" id="GO:0015935">
    <property type="term" value="C:small ribosomal subunit"/>
    <property type="evidence" value="ECO:0007669"/>
    <property type="project" value="TreeGrafter"/>
</dbReference>
<dbReference type="GO" id="GO:0070181">
    <property type="term" value="F:small ribosomal subunit rRNA binding"/>
    <property type="evidence" value="ECO:0007669"/>
    <property type="project" value="TreeGrafter"/>
</dbReference>
<dbReference type="GO" id="GO:0003735">
    <property type="term" value="F:structural constituent of ribosome"/>
    <property type="evidence" value="ECO:0007669"/>
    <property type="project" value="InterPro"/>
</dbReference>
<dbReference type="GO" id="GO:0006412">
    <property type="term" value="P:translation"/>
    <property type="evidence" value="ECO:0007669"/>
    <property type="project" value="UniProtKB-UniRule"/>
</dbReference>
<dbReference type="FunFam" id="1.20.58.110:FF:000001">
    <property type="entry name" value="30S ribosomal protein S20"/>
    <property type="match status" value="1"/>
</dbReference>
<dbReference type="Gene3D" id="1.20.58.110">
    <property type="entry name" value="Ribosomal protein S20"/>
    <property type="match status" value="1"/>
</dbReference>
<dbReference type="HAMAP" id="MF_00500">
    <property type="entry name" value="Ribosomal_bS20"/>
    <property type="match status" value="1"/>
</dbReference>
<dbReference type="InterPro" id="IPR002583">
    <property type="entry name" value="Ribosomal_bS20"/>
</dbReference>
<dbReference type="InterPro" id="IPR036510">
    <property type="entry name" value="Ribosomal_bS20_sf"/>
</dbReference>
<dbReference type="NCBIfam" id="TIGR00029">
    <property type="entry name" value="S20"/>
    <property type="match status" value="1"/>
</dbReference>
<dbReference type="PANTHER" id="PTHR33398">
    <property type="entry name" value="30S RIBOSOMAL PROTEIN S20"/>
    <property type="match status" value="1"/>
</dbReference>
<dbReference type="PANTHER" id="PTHR33398:SF1">
    <property type="entry name" value="SMALL RIBOSOMAL SUBUNIT PROTEIN BS20C"/>
    <property type="match status" value="1"/>
</dbReference>
<dbReference type="Pfam" id="PF01649">
    <property type="entry name" value="Ribosomal_S20p"/>
    <property type="match status" value="1"/>
</dbReference>
<dbReference type="SUPFAM" id="SSF46992">
    <property type="entry name" value="Ribosomal protein S20"/>
    <property type="match status" value="1"/>
</dbReference>
<evidence type="ECO:0000255" key="1">
    <source>
        <dbReference type="HAMAP-Rule" id="MF_00500"/>
    </source>
</evidence>
<evidence type="ECO:0000256" key="2">
    <source>
        <dbReference type="SAM" id="MobiDB-lite"/>
    </source>
</evidence>
<evidence type="ECO:0000305" key="3"/>
<name>RS20_ACIAD</name>
<sequence>MANSAQAKKRARQNVKARKHNASLRSMVRTYIKRTVNAIAAGDYTVATEAYKKAVPVIDRMADKGIIHKNKAARHKSRLNAQVKALASN</sequence>
<gene>
    <name evidence="1" type="primary">rpsT</name>
    <name type="ordered locus">ACIAD1389</name>
</gene>
<reference key="1">
    <citation type="journal article" date="2004" name="Nucleic Acids Res.">
        <title>Unique features revealed by the genome sequence of Acinetobacter sp. ADP1, a versatile and naturally transformation competent bacterium.</title>
        <authorList>
            <person name="Barbe V."/>
            <person name="Vallenet D."/>
            <person name="Fonknechten N."/>
            <person name="Kreimeyer A."/>
            <person name="Oztas S."/>
            <person name="Labarre L."/>
            <person name="Cruveiller S."/>
            <person name="Robert C."/>
            <person name="Duprat S."/>
            <person name="Wincker P."/>
            <person name="Ornston L.N."/>
            <person name="Weissenbach J."/>
            <person name="Marliere P."/>
            <person name="Cohen G.N."/>
            <person name="Medigue C."/>
        </authorList>
    </citation>
    <scope>NUCLEOTIDE SEQUENCE [LARGE SCALE GENOMIC DNA]</scope>
    <source>
        <strain>ATCC 33305 / BD413 / ADP1</strain>
    </source>
</reference>
<feature type="chain" id="PRO_0000167901" description="Small ribosomal subunit protein bS20">
    <location>
        <begin position="1"/>
        <end position="89"/>
    </location>
</feature>
<feature type="region of interest" description="Disordered" evidence="2">
    <location>
        <begin position="1"/>
        <end position="21"/>
    </location>
</feature>
<feature type="compositionally biased region" description="Basic residues" evidence="2">
    <location>
        <begin position="7"/>
        <end position="21"/>
    </location>
</feature>
<accession>Q6FCF6</accession>
<protein>
    <recommendedName>
        <fullName evidence="1">Small ribosomal subunit protein bS20</fullName>
    </recommendedName>
    <alternativeName>
        <fullName evidence="3">30S ribosomal protein S20</fullName>
    </alternativeName>
</protein>
<proteinExistence type="inferred from homology"/>
<keyword id="KW-0687">Ribonucleoprotein</keyword>
<keyword id="KW-0689">Ribosomal protein</keyword>
<keyword id="KW-0694">RNA-binding</keyword>
<keyword id="KW-0699">rRNA-binding</keyword>
<comment type="function">
    <text evidence="1">Binds directly to 16S ribosomal RNA.</text>
</comment>
<comment type="similarity">
    <text evidence="1">Belongs to the bacterial ribosomal protein bS20 family.</text>
</comment>